<gene>
    <name evidence="1" type="primary">clpP2</name>
    <name type="ordered locus">NFA_13330</name>
</gene>
<evidence type="ECO:0000255" key="1">
    <source>
        <dbReference type="HAMAP-Rule" id="MF_00444"/>
    </source>
</evidence>
<accession>Q5Z063</accession>
<feature type="chain" id="PRO_0000179605" description="ATP-dependent Clp protease proteolytic subunit 2">
    <location>
        <begin position="1"/>
        <end position="203"/>
    </location>
</feature>
<feature type="active site" description="Nucleophile" evidence="1">
    <location>
        <position position="100"/>
    </location>
</feature>
<feature type="active site" evidence="1">
    <location>
        <position position="125"/>
    </location>
</feature>
<keyword id="KW-0963">Cytoplasm</keyword>
<keyword id="KW-0378">Hydrolase</keyword>
<keyword id="KW-0645">Protease</keyword>
<keyword id="KW-1185">Reference proteome</keyword>
<keyword id="KW-0720">Serine protease</keyword>
<comment type="function">
    <text evidence="1">Cleaves peptides in various proteins in a process that requires ATP hydrolysis. Has a chymotrypsin-like activity. Plays a major role in the degradation of misfolded proteins.</text>
</comment>
<comment type="catalytic activity">
    <reaction evidence="1">
        <text>Hydrolysis of proteins to small peptides in the presence of ATP and magnesium. alpha-casein is the usual test substrate. In the absence of ATP, only oligopeptides shorter than five residues are hydrolyzed (such as succinyl-Leu-Tyr-|-NHMec, and Leu-Tyr-Leu-|-Tyr-Trp, in which cleavage of the -Tyr-|-Leu- and -Tyr-|-Trp bonds also occurs).</text>
        <dbReference type="EC" id="3.4.21.92"/>
    </reaction>
</comment>
<comment type="subunit">
    <text evidence="1">Fourteen ClpP subunits assemble into 2 heptameric rings which stack back to back to give a disk-like structure with a central cavity, resembling the structure of eukaryotic proteasomes.</text>
</comment>
<comment type="subcellular location">
    <subcellularLocation>
        <location evidence="1">Cytoplasm</location>
    </subcellularLocation>
</comment>
<comment type="similarity">
    <text evidence="1">Belongs to the peptidase S14 family.</text>
</comment>
<dbReference type="EC" id="3.4.21.92" evidence="1"/>
<dbReference type="EMBL" id="AP006618">
    <property type="protein sequence ID" value="BAD56178.1"/>
    <property type="molecule type" value="Genomic_DNA"/>
</dbReference>
<dbReference type="SMR" id="Q5Z063"/>
<dbReference type="STRING" id="247156.NFA_13330"/>
<dbReference type="MEROPS" id="S14.008"/>
<dbReference type="KEGG" id="nfa:NFA_13330"/>
<dbReference type="eggNOG" id="COG0740">
    <property type="taxonomic scope" value="Bacteria"/>
</dbReference>
<dbReference type="HOGENOM" id="CLU_058707_3_2_11"/>
<dbReference type="Proteomes" id="UP000006820">
    <property type="component" value="Chromosome"/>
</dbReference>
<dbReference type="GO" id="GO:0005737">
    <property type="term" value="C:cytoplasm"/>
    <property type="evidence" value="ECO:0007669"/>
    <property type="project" value="UniProtKB-SubCell"/>
</dbReference>
<dbReference type="GO" id="GO:0009368">
    <property type="term" value="C:endopeptidase Clp complex"/>
    <property type="evidence" value="ECO:0007669"/>
    <property type="project" value="TreeGrafter"/>
</dbReference>
<dbReference type="GO" id="GO:0004176">
    <property type="term" value="F:ATP-dependent peptidase activity"/>
    <property type="evidence" value="ECO:0007669"/>
    <property type="project" value="InterPro"/>
</dbReference>
<dbReference type="GO" id="GO:0051117">
    <property type="term" value="F:ATPase binding"/>
    <property type="evidence" value="ECO:0007669"/>
    <property type="project" value="TreeGrafter"/>
</dbReference>
<dbReference type="GO" id="GO:0004252">
    <property type="term" value="F:serine-type endopeptidase activity"/>
    <property type="evidence" value="ECO:0007669"/>
    <property type="project" value="UniProtKB-UniRule"/>
</dbReference>
<dbReference type="GO" id="GO:0006515">
    <property type="term" value="P:protein quality control for misfolded or incompletely synthesized proteins"/>
    <property type="evidence" value="ECO:0007669"/>
    <property type="project" value="TreeGrafter"/>
</dbReference>
<dbReference type="CDD" id="cd07017">
    <property type="entry name" value="S14_ClpP_2"/>
    <property type="match status" value="1"/>
</dbReference>
<dbReference type="FunFam" id="3.90.226.10:FF:000002">
    <property type="entry name" value="ATP-dependent Clp protease proteolytic subunit"/>
    <property type="match status" value="1"/>
</dbReference>
<dbReference type="Gene3D" id="3.90.226.10">
    <property type="entry name" value="2-enoyl-CoA Hydratase, Chain A, domain 1"/>
    <property type="match status" value="1"/>
</dbReference>
<dbReference type="HAMAP" id="MF_00444">
    <property type="entry name" value="ClpP"/>
    <property type="match status" value="1"/>
</dbReference>
<dbReference type="InterPro" id="IPR001907">
    <property type="entry name" value="ClpP"/>
</dbReference>
<dbReference type="InterPro" id="IPR029045">
    <property type="entry name" value="ClpP/crotonase-like_dom_sf"/>
</dbReference>
<dbReference type="InterPro" id="IPR023562">
    <property type="entry name" value="ClpP/TepA"/>
</dbReference>
<dbReference type="InterPro" id="IPR033135">
    <property type="entry name" value="ClpP_His_AS"/>
</dbReference>
<dbReference type="NCBIfam" id="NF001368">
    <property type="entry name" value="PRK00277.1"/>
    <property type="match status" value="1"/>
</dbReference>
<dbReference type="NCBIfam" id="NF009205">
    <property type="entry name" value="PRK12553.1"/>
    <property type="match status" value="1"/>
</dbReference>
<dbReference type="PANTHER" id="PTHR10381">
    <property type="entry name" value="ATP-DEPENDENT CLP PROTEASE PROTEOLYTIC SUBUNIT"/>
    <property type="match status" value="1"/>
</dbReference>
<dbReference type="PANTHER" id="PTHR10381:SF70">
    <property type="entry name" value="ATP-DEPENDENT CLP PROTEASE PROTEOLYTIC SUBUNIT"/>
    <property type="match status" value="1"/>
</dbReference>
<dbReference type="Pfam" id="PF00574">
    <property type="entry name" value="CLP_protease"/>
    <property type="match status" value="1"/>
</dbReference>
<dbReference type="PRINTS" id="PR00127">
    <property type="entry name" value="CLPPROTEASEP"/>
</dbReference>
<dbReference type="SUPFAM" id="SSF52096">
    <property type="entry name" value="ClpP/crotonase"/>
    <property type="match status" value="1"/>
</dbReference>
<dbReference type="PROSITE" id="PS00382">
    <property type="entry name" value="CLP_PROTEASE_HIS"/>
    <property type="match status" value="1"/>
</dbReference>
<organism>
    <name type="scientific">Nocardia farcinica (strain IFM 10152)</name>
    <dbReference type="NCBI Taxonomy" id="247156"/>
    <lineage>
        <taxon>Bacteria</taxon>
        <taxon>Bacillati</taxon>
        <taxon>Actinomycetota</taxon>
        <taxon>Actinomycetes</taxon>
        <taxon>Mycobacteriales</taxon>
        <taxon>Nocardiaceae</taxon>
        <taxon>Nocardia</taxon>
    </lineage>
</organism>
<name>CLPP2_NOCFA</name>
<sequence>MTKNQAGVMTSATAGLNLSDSVYERLLRERIIFLGTQVDDDIANKLCAQILLLSAEDPTRDISLYINSPGGSVTAGMAIYDTMQFAECDIRTVGMGLAASMGQFLLTAGTKGKRYALPHARIMMHQPSAGIGGSAADIAIMAEQFAHTKRELNELQALHTGKSVEQVTADADRDRWFTAQEALEYGFIDHVISHANQANGIGG</sequence>
<proteinExistence type="inferred from homology"/>
<protein>
    <recommendedName>
        <fullName evidence="1">ATP-dependent Clp protease proteolytic subunit 2</fullName>
        <ecNumber evidence="1">3.4.21.92</ecNumber>
    </recommendedName>
    <alternativeName>
        <fullName evidence="1">Endopeptidase Clp 2</fullName>
    </alternativeName>
</protein>
<reference key="1">
    <citation type="journal article" date="2004" name="Proc. Natl. Acad. Sci. U.S.A.">
        <title>The complete genomic sequence of Nocardia farcinica IFM 10152.</title>
        <authorList>
            <person name="Ishikawa J."/>
            <person name="Yamashita A."/>
            <person name="Mikami Y."/>
            <person name="Hoshino Y."/>
            <person name="Kurita H."/>
            <person name="Hotta K."/>
            <person name="Shiba T."/>
            <person name="Hattori M."/>
        </authorList>
    </citation>
    <scope>NUCLEOTIDE SEQUENCE [LARGE SCALE GENOMIC DNA]</scope>
    <source>
        <strain>IFM 10152</strain>
    </source>
</reference>